<name>HIS6_MANSM</name>
<evidence type="ECO:0000255" key="1">
    <source>
        <dbReference type="HAMAP-Rule" id="MF_01013"/>
    </source>
</evidence>
<dbReference type="EC" id="4.3.2.10" evidence="1"/>
<dbReference type="EMBL" id="AE016827">
    <property type="protein sequence ID" value="AAU38489.1"/>
    <property type="molecule type" value="Genomic_DNA"/>
</dbReference>
<dbReference type="RefSeq" id="WP_011201042.1">
    <property type="nucleotide sequence ID" value="NC_006300.1"/>
</dbReference>
<dbReference type="SMR" id="Q65RC1"/>
<dbReference type="STRING" id="221988.MS1882"/>
<dbReference type="KEGG" id="msu:MS1882"/>
<dbReference type="eggNOG" id="COG0107">
    <property type="taxonomic scope" value="Bacteria"/>
</dbReference>
<dbReference type="HOGENOM" id="CLU_048577_4_0_6"/>
<dbReference type="OrthoDB" id="9781903at2"/>
<dbReference type="UniPathway" id="UPA00031">
    <property type="reaction ID" value="UER00010"/>
</dbReference>
<dbReference type="Proteomes" id="UP000000607">
    <property type="component" value="Chromosome"/>
</dbReference>
<dbReference type="GO" id="GO:0005737">
    <property type="term" value="C:cytoplasm"/>
    <property type="evidence" value="ECO:0007669"/>
    <property type="project" value="UniProtKB-SubCell"/>
</dbReference>
<dbReference type="GO" id="GO:0000107">
    <property type="term" value="F:imidazoleglycerol-phosphate synthase activity"/>
    <property type="evidence" value="ECO:0007669"/>
    <property type="project" value="UniProtKB-UniRule"/>
</dbReference>
<dbReference type="GO" id="GO:0016829">
    <property type="term" value="F:lyase activity"/>
    <property type="evidence" value="ECO:0007669"/>
    <property type="project" value="UniProtKB-KW"/>
</dbReference>
<dbReference type="GO" id="GO:0000105">
    <property type="term" value="P:L-histidine biosynthetic process"/>
    <property type="evidence" value="ECO:0007669"/>
    <property type="project" value="UniProtKB-UniRule"/>
</dbReference>
<dbReference type="CDD" id="cd04731">
    <property type="entry name" value="HisF"/>
    <property type="match status" value="1"/>
</dbReference>
<dbReference type="FunFam" id="3.20.20.70:FF:000006">
    <property type="entry name" value="Imidazole glycerol phosphate synthase subunit HisF"/>
    <property type="match status" value="1"/>
</dbReference>
<dbReference type="Gene3D" id="3.20.20.70">
    <property type="entry name" value="Aldolase class I"/>
    <property type="match status" value="1"/>
</dbReference>
<dbReference type="HAMAP" id="MF_01013">
    <property type="entry name" value="HisF"/>
    <property type="match status" value="1"/>
</dbReference>
<dbReference type="InterPro" id="IPR013785">
    <property type="entry name" value="Aldolase_TIM"/>
</dbReference>
<dbReference type="InterPro" id="IPR006062">
    <property type="entry name" value="His_biosynth"/>
</dbReference>
<dbReference type="InterPro" id="IPR004651">
    <property type="entry name" value="HisF"/>
</dbReference>
<dbReference type="InterPro" id="IPR050064">
    <property type="entry name" value="IGPS_HisA/HisF"/>
</dbReference>
<dbReference type="InterPro" id="IPR011060">
    <property type="entry name" value="RibuloseP-bd_barrel"/>
</dbReference>
<dbReference type="NCBIfam" id="TIGR00735">
    <property type="entry name" value="hisF"/>
    <property type="match status" value="1"/>
</dbReference>
<dbReference type="PANTHER" id="PTHR21235:SF2">
    <property type="entry name" value="IMIDAZOLE GLYCEROL PHOSPHATE SYNTHASE HISHF"/>
    <property type="match status" value="1"/>
</dbReference>
<dbReference type="PANTHER" id="PTHR21235">
    <property type="entry name" value="IMIDAZOLE GLYCEROL PHOSPHATE SYNTHASE SUBUNIT HISF/H IGP SYNTHASE SUBUNIT HISF/H"/>
    <property type="match status" value="1"/>
</dbReference>
<dbReference type="Pfam" id="PF00977">
    <property type="entry name" value="His_biosynth"/>
    <property type="match status" value="1"/>
</dbReference>
<dbReference type="SUPFAM" id="SSF51366">
    <property type="entry name" value="Ribulose-phoshate binding barrel"/>
    <property type="match status" value="1"/>
</dbReference>
<keyword id="KW-0028">Amino-acid biosynthesis</keyword>
<keyword id="KW-0963">Cytoplasm</keyword>
<keyword id="KW-0368">Histidine biosynthesis</keyword>
<keyword id="KW-0456">Lyase</keyword>
<gene>
    <name evidence="1" type="primary">hisF</name>
    <name type="ordered locus">MS1882</name>
</gene>
<proteinExistence type="inferred from homology"/>
<protein>
    <recommendedName>
        <fullName evidence="1">Imidazole glycerol phosphate synthase subunit HisF</fullName>
        <ecNumber evidence="1">4.3.2.10</ecNumber>
    </recommendedName>
    <alternativeName>
        <fullName evidence="1">IGP synthase cyclase subunit</fullName>
    </alternativeName>
    <alternativeName>
        <fullName evidence="1">IGP synthase subunit HisF</fullName>
    </alternativeName>
    <alternativeName>
        <fullName evidence="1">ImGP synthase subunit HisF</fullName>
        <shortName evidence="1">IGPS subunit HisF</shortName>
    </alternativeName>
</protein>
<feature type="chain" id="PRO_0000142180" description="Imidazole glycerol phosphate synthase subunit HisF">
    <location>
        <begin position="1"/>
        <end position="257"/>
    </location>
</feature>
<feature type="active site" evidence="1">
    <location>
        <position position="11"/>
    </location>
</feature>
<feature type="active site" evidence="1">
    <location>
        <position position="130"/>
    </location>
</feature>
<comment type="function">
    <text evidence="1">IGPS catalyzes the conversion of PRFAR and glutamine to IGP, AICAR and glutamate. The HisF subunit catalyzes the cyclization activity that produces IGP and AICAR from PRFAR using the ammonia provided by the HisH subunit.</text>
</comment>
<comment type="catalytic activity">
    <reaction evidence="1">
        <text>5-[(5-phospho-1-deoxy-D-ribulos-1-ylimino)methylamino]-1-(5-phospho-beta-D-ribosyl)imidazole-4-carboxamide + L-glutamine = D-erythro-1-(imidazol-4-yl)glycerol 3-phosphate + 5-amino-1-(5-phospho-beta-D-ribosyl)imidazole-4-carboxamide + L-glutamate + H(+)</text>
        <dbReference type="Rhea" id="RHEA:24793"/>
        <dbReference type="ChEBI" id="CHEBI:15378"/>
        <dbReference type="ChEBI" id="CHEBI:29985"/>
        <dbReference type="ChEBI" id="CHEBI:58278"/>
        <dbReference type="ChEBI" id="CHEBI:58359"/>
        <dbReference type="ChEBI" id="CHEBI:58475"/>
        <dbReference type="ChEBI" id="CHEBI:58525"/>
        <dbReference type="EC" id="4.3.2.10"/>
    </reaction>
</comment>
<comment type="pathway">
    <text evidence="1">Amino-acid biosynthesis; L-histidine biosynthesis; L-histidine from 5-phospho-alpha-D-ribose 1-diphosphate: step 5/9.</text>
</comment>
<comment type="subunit">
    <text evidence="1">Heterodimer of HisH and HisF.</text>
</comment>
<comment type="subcellular location">
    <subcellularLocation>
        <location evidence="1">Cytoplasm</location>
    </subcellularLocation>
</comment>
<comment type="similarity">
    <text evidence="1">Belongs to the HisA/HisF family.</text>
</comment>
<sequence length="257" mass="28558">MLAKRIIPCLDVRNGQVVKGVQFRNHEIIGDIVPLAARYAEEGADELVFYDITASSDGRTVDKSWVERVAEVIDIPFCVAGGIKTIADAEQIFTFGADKISINSPALADPDLISRLADRFGVQAIVVGIDSWFEQETGKYWVNQYTGDESRTRQTNWQLLDWVKEVQKRGAGEIVLNMMNQDGVRNGYDLTQLKLVRDVCKVPLIASGGAGEMVHFRDAFIEANVDGALAASVFHKQIINIGELKEYLAREGVEVRR</sequence>
<accession>Q65RC1</accession>
<organism>
    <name type="scientific">Mannheimia succiniciproducens (strain KCTC 0769BP / MBEL55E)</name>
    <dbReference type="NCBI Taxonomy" id="221988"/>
    <lineage>
        <taxon>Bacteria</taxon>
        <taxon>Pseudomonadati</taxon>
        <taxon>Pseudomonadota</taxon>
        <taxon>Gammaproteobacteria</taxon>
        <taxon>Pasteurellales</taxon>
        <taxon>Pasteurellaceae</taxon>
        <taxon>Basfia</taxon>
    </lineage>
</organism>
<reference key="1">
    <citation type="journal article" date="2004" name="Nat. Biotechnol.">
        <title>The genome sequence of the capnophilic rumen bacterium Mannheimia succiniciproducens.</title>
        <authorList>
            <person name="Hong S.H."/>
            <person name="Kim J.S."/>
            <person name="Lee S.Y."/>
            <person name="In Y.H."/>
            <person name="Choi S.S."/>
            <person name="Rih J.-K."/>
            <person name="Kim C.H."/>
            <person name="Jeong H."/>
            <person name="Hur C.G."/>
            <person name="Kim J.J."/>
        </authorList>
    </citation>
    <scope>NUCLEOTIDE SEQUENCE [LARGE SCALE GENOMIC DNA]</scope>
    <source>
        <strain>KCTC 0769BP / MBEL55E</strain>
    </source>
</reference>